<keyword id="KW-0687">Ribonucleoprotein</keyword>
<keyword id="KW-0689">Ribosomal protein</keyword>
<keyword id="KW-0694">RNA-binding</keyword>
<keyword id="KW-0699">rRNA-binding</keyword>
<evidence type="ECO:0000255" key="1">
    <source>
        <dbReference type="HAMAP-Rule" id="MF_01365"/>
    </source>
</evidence>
<evidence type="ECO:0000305" key="2"/>
<dbReference type="EMBL" id="CP000061">
    <property type="protein sequence ID" value="ABC65624.1"/>
    <property type="status" value="ALT_INIT"/>
    <property type="molecule type" value="Genomic_DNA"/>
</dbReference>
<dbReference type="RefSeq" id="WP_011412786.1">
    <property type="nucleotide sequence ID" value="NC_007716.1"/>
</dbReference>
<dbReference type="SMR" id="Q2NIW9"/>
<dbReference type="STRING" id="322098.AYWB_507"/>
<dbReference type="KEGG" id="ayw:AYWB_507"/>
<dbReference type="eggNOG" id="COG0097">
    <property type="taxonomic scope" value="Bacteria"/>
</dbReference>
<dbReference type="HOGENOM" id="CLU_065464_1_2_14"/>
<dbReference type="OrthoDB" id="9805007at2"/>
<dbReference type="Proteomes" id="UP000001934">
    <property type="component" value="Chromosome"/>
</dbReference>
<dbReference type="GO" id="GO:0022625">
    <property type="term" value="C:cytosolic large ribosomal subunit"/>
    <property type="evidence" value="ECO:0007669"/>
    <property type="project" value="TreeGrafter"/>
</dbReference>
<dbReference type="GO" id="GO:0019843">
    <property type="term" value="F:rRNA binding"/>
    <property type="evidence" value="ECO:0007669"/>
    <property type="project" value="UniProtKB-UniRule"/>
</dbReference>
<dbReference type="GO" id="GO:0003735">
    <property type="term" value="F:structural constituent of ribosome"/>
    <property type="evidence" value="ECO:0007669"/>
    <property type="project" value="InterPro"/>
</dbReference>
<dbReference type="GO" id="GO:0002181">
    <property type="term" value="P:cytoplasmic translation"/>
    <property type="evidence" value="ECO:0007669"/>
    <property type="project" value="TreeGrafter"/>
</dbReference>
<dbReference type="FunFam" id="3.90.930.12:FF:000001">
    <property type="entry name" value="50S ribosomal protein L6"/>
    <property type="match status" value="1"/>
</dbReference>
<dbReference type="FunFam" id="3.90.930.12:FF:000002">
    <property type="entry name" value="50S ribosomal protein L6"/>
    <property type="match status" value="1"/>
</dbReference>
<dbReference type="Gene3D" id="3.90.930.12">
    <property type="entry name" value="Ribosomal protein L6, alpha-beta domain"/>
    <property type="match status" value="2"/>
</dbReference>
<dbReference type="HAMAP" id="MF_01365_B">
    <property type="entry name" value="Ribosomal_uL6_B"/>
    <property type="match status" value="1"/>
</dbReference>
<dbReference type="InterPro" id="IPR000702">
    <property type="entry name" value="Ribosomal_uL6-like"/>
</dbReference>
<dbReference type="InterPro" id="IPR036789">
    <property type="entry name" value="Ribosomal_uL6-like_a/b-dom_sf"/>
</dbReference>
<dbReference type="InterPro" id="IPR020040">
    <property type="entry name" value="Ribosomal_uL6_a/b-dom"/>
</dbReference>
<dbReference type="InterPro" id="IPR019906">
    <property type="entry name" value="Ribosomal_uL6_bac-type"/>
</dbReference>
<dbReference type="InterPro" id="IPR002358">
    <property type="entry name" value="Ribosomal_uL6_CS"/>
</dbReference>
<dbReference type="NCBIfam" id="TIGR03654">
    <property type="entry name" value="L6_bact"/>
    <property type="match status" value="1"/>
</dbReference>
<dbReference type="PANTHER" id="PTHR11655">
    <property type="entry name" value="60S/50S RIBOSOMAL PROTEIN L6/L9"/>
    <property type="match status" value="1"/>
</dbReference>
<dbReference type="PANTHER" id="PTHR11655:SF14">
    <property type="entry name" value="LARGE RIBOSOMAL SUBUNIT PROTEIN UL6M"/>
    <property type="match status" value="1"/>
</dbReference>
<dbReference type="Pfam" id="PF00347">
    <property type="entry name" value="Ribosomal_L6"/>
    <property type="match status" value="2"/>
</dbReference>
<dbReference type="PIRSF" id="PIRSF002162">
    <property type="entry name" value="Ribosomal_L6"/>
    <property type="match status" value="1"/>
</dbReference>
<dbReference type="PRINTS" id="PR00059">
    <property type="entry name" value="RIBOSOMALL6"/>
</dbReference>
<dbReference type="SUPFAM" id="SSF56053">
    <property type="entry name" value="Ribosomal protein L6"/>
    <property type="match status" value="2"/>
</dbReference>
<dbReference type="PROSITE" id="PS00525">
    <property type="entry name" value="RIBOSOMAL_L6_1"/>
    <property type="match status" value="1"/>
</dbReference>
<name>RL6_AYWBP</name>
<accession>Q2NIW9</accession>
<feature type="chain" id="PRO_0000260837" description="Large ribosomal subunit protein uL6">
    <location>
        <begin position="1"/>
        <end position="184"/>
    </location>
</feature>
<reference key="1">
    <citation type="journal article" date="2006" name="J. Bacteriol.">
        <title>Living with genome instability: the adaptation of phytoplasmas to diverse environments of their insect and plant hosts.</title>
        <authorList>
            <person name="Bai X."/>
            <person name="Zhang J."/>
            <person name="Ewing A."/>
            <person name="Miller S.A."/>
            <person name="Jancso Radek A."/>
            <person name="Shevchenko D.V."/>
            <person name="Tsukerman K."/>
            <person name="Walunas T."/>
            <person name="Lapidus A."/>
            <person name="Campbell J.W."/>
            <person name="Hogenhout S.A."/>
        </authorList>
    </citation>
    <scope>NUCLEOTIDE SEQUENCE [LARGE SCALE GENOMIC DNA]</scope>
    <source>
        <strain>AYWB</strain>
    </source>
</reference>
<organism>
    <name type="scientific">Aster yellows witches'-broom phytoplasma (strain AYWB)</name>
    <dbReference type="NCBI Taxonomy" id="322098"/>
    <lineage>
        <taxon>Bacteria</taxon>
        <taxon>Bacillati</taxon>
        <taxon>Mycoplasmatota</taxon>
        <taxon>Mollicutes</taxon>
        <taxon>Acholeplasmatales</taxon>
        <taxon>Acholeplasmataceae</taxon>
        <taxon>Candidatus Phytoplasma</taxon>
        <taxon>16SrI (Aster yellows group)</taxon>
    </lineage>
</organism>
<gene>
    <name evidence="1" type="primary">rplF</name>
    <name type="ordered locus">AYWB_507</name>
</gene>
<comment type="function">
    <text evidence="1">This protein binds to the 23S rRNA, and is important in its secondary structure. It is located near the subunit interface in the base of the L7/L12 stalk, and near the tRNA binding site of the peptidyltransferase center.</text>
</comment>
<comment type="subunit">
    <text evidence="1">Part of the 50S ribosomal subunit.</text>
</comment>
<comment type="similarity">
    <text evidence="1">Belongs to the universal ribosomal protein uL6 family.</text>
</comment>
<comment type="sequence caution" evidence="2">
    <conflict type="erroneous initiation">
        <sequence resource="EMBL-CDS" id="ABC65624"/>
    </conflict>
</comment>
<proteinExistence type="inferred from homology"/>
<protein>
    <recommendedName>
        <fullName evidence="1">Large ribosomal subunit protein uL6</fullName>
    </recommendedName>
    <alternativeName>
        <fullName evidence="2">50S ribosomal protein L6</fullName>
    </alternativeName>
</protein>
<sequence length="184" mass="20594">MSRVGNKAIEVPNAVKVDIKDRNFISVEGPKGKLEYQFNHRLIITNENKVITVKRPNDEIFMKKIHGTTRALLSNMVEGVSKGFQKTLKIVGLAYRAQIKGKQLILSLGFSHPVSVAIPDNLEVVVNQNTEIVIKGIDKQLVGEFAAKNVKLRKPEPYKGKGIRYVGQYVRQKAGKSAKKTRKD</sequence>